<feature type="signal peptide" evidence="1">
    <location>
        <begin position="1"/>
        <end position="20"/>
    </location>
</feature>
<feature type="propeptide" id="PRO_0000397119" evidence="2">
    <location>
        <begin position="21"/>
        <end position="40"/>
    </location>
</feature>
<feature type="peptide" id="PRO_0000397120" description="Conotoxin ca17a" evidence="2">
    <location>
        <begin position="41"/>
        <end position="74"/>
    </location>
</feature>
<feature type="modified residue" description="4-hydroxyproline" evidence="2">
    <location>
        <position position="51"/>
    </location>
</feature>
<organism>
    <name type="scientific">Conus caracteristicus</name>
    <name type="common">Characteristic cone</name>
    <dbReference type="NCBI Taxonomy" id="89440"/>
    <lineage>
        <taxon>Eukaryota</taxon>
        <taxon>Metazoa</taxon>
        <taxon>Spiralia</taxon>
        <taxon>Lophotrochozoa</taxon>
        <taxon>Mollusca</taxon>
        <taxon>Gastropoda</taxon>
        <taxon>Caenogastropoda</taxon>
        <taxon>Neogastropoda</taxon>
        <taxon>Conoidea</taxon>
        <taxon>Conidae</taxon>
        <taxon>Conus</taxon>
    </lineage>
</organism>
<sequence>MQKATVLLLALLLLLPLSTAQDAEGSQEDAAQREVDIATRCGGTGDSCNEPAGELCCRRLKCVNSRCCPTTDGC</sequence>
<protein>
    <recommendedName>
        <fullName evidence="4">Conotoxin ca17a</fullName>
    </recommendedName>
    <alternativeName>
        <fullName evidence="3">Conotoxin ca16a</fullName>
    </alternativeName>
</protein>
<accession>B4YSU8</accession>
<comment type="subcellular location">
    <subcellularLocation>
        <location evidence="2">Secreted</location>
    </subcellularLocation>
</comment>
<comment type="tissue specificity">
    <text evidence="4">Expressed by the venom gland.</text>
</comment>
<comment type="domain">
    <text>The cysteine framework is XVII (C-C-CC-C-CC-C).</text>
</comment>
<comment type="PTM">
    <text evidence="4">Contains disulfide bonds.</text>
</comment>
<comment type="mass spectrometry"/>
<comment type="similarity">
    <text evidence="4">Belongs to the conotoxin Y superfamily.</text>
</comment>
<comment type="caution">
    <text evidence="5">The authors initially published the new framework as framework XVI which was already attributed to another cysteine pattern (AC Q2I2P8). In order to be consistent with the current nomenclature rules and with the new reassignment proposed by ConoServer, we now designate this cysteine pattern as XVII. We also follow ConoServer for assigning this toxin to the conotoxin Y superfamily.</text>
</comment>
<dbReference type="EMBL" id="EU675847">
    <property type="protein sequence ID" value="ACF93417.1"/>
    <property type="molecule type" value="mRNA"/>
</dbReference>
<dbReference type="SMR" id="B4YSU8"/>
<dbReference type="ConoServer" id="2839">
    <property type="toxin name" value="CaXVIIA precursor"/>
</dbReference>
<dbReference type="GO" id="GO:0005576">
    <property type="term" value="C:extracellular region"/>
    <property type="evidence" value="ECO:0007669"/>
    <property type="project" value="UniProtKB-SubCell"/>
</dbReference>
<dbReference type="GO" id="GO:0090729">
    <property type="term" value="F:toxin activity"/>
    <property type="evidence" value="ECO:0007669"/>
    <property type="project" value="UniProtKB-KW"/>
</dbReference>
<proteinExistence type="evidence at protein level"/>
<evidence type="ECO:0000255" key="1"/>
<evidence type="ECO:0000269" key="2">
    <source>
    </source>
</evidence>
<evidence type="ECO:0000303" key="3">
    <source>
    </source>
</evidence>
<evidence type="ECO:0000305" key="4"/>
<evidence type="ECO:0000305" key="5">
    <source>
    </source>
</evidence>
<keyword id="KW-0903">Direct protein sequencing</keyword>
<keyword id="KW-1015">Disulfide bond</keyword>
<keyword id="KW-0379">Hydroxylation</keyword>
<keyword id="KW-0964">Secreted</keyword>
<keyword id="KW-0732">Signal</keyword>
<keyword id="KW-0800">Toxin</keyword>
<name>CXY17_CONCB</name>
<reference key="1">
    <citation type="journal article" date="2008" name="Peptides">
        <title>Isolation and cloning of a conotoxin with a novel cysteine pattern from Conus caracteristicus.</title>
        <authorList>
            <person name="Yuan D.-D."/>
            <person name="Liu L."/>
            <person name="Shao X.-X."/>
            <person name="Peng C."/>
            <person name="Chi C.-W."/>
            <person name="Guo Z.-Y."/>
        </authorList>
    </citation>
    <scope>NUCLEOTIDE SEQUENCE [MRNA]</scope>
    <scope>PROTEIN SEQUENCE OF 41-74</scope>
    <scope>MASS SPECTROMETRY</scope>
    <scope>HYDROXYLATION AT PRO-51</scope>
    <scope>SUBCELLULAR LOCATION</scope>
    <source>
        <tissue>Venom</tissue>
        <tissue>Venom duct</tissue>
    </source>
</reference>